<sequence length="666" mass="74469">MLGKLDWSAIPFDQPIPLIAGAVVLVAILAVLVWVVVKGHLPYLWHEWITSVDHKRIGVMYILLASIMLLRGGSDAIMMRIQQAVAYQSQGYLPPEHYNQIFSAHGTIMIFFVAMPFVIGLMNLVVPLQLGVRDVAFPTLNSVGFWLTATGALLVNLSLVIGEFARTGWLAFPPLSGLSYSPGVGVDYYAWSLQISGVGTLVAGINLVTTVLKLRTKGMNYLRMPMFCWTTLASNLLIVAAFPILTATLAMLLLDRYLGFHFFTNEAGGNVMMFMNLIWAWGHPEVYILVLPAFGIFSEVVSTFSGKALFGYRSMVLATMAICVISFMVWLHHFFTMGAGPDVNAIFGIASMIIAVPTGVKIYNWLFTMYGGRIRFATPMLWAVGFMVTFIIGGLTGVLVAVPPADFMLHNSMFLVAHFHNVIIGGVLFGAFAGFEYWFPKAFGFRLDERWGKLAFWFTFLGFYVTFMPLYIAGMLGMTRRLQHYDVAAWRPWMLVAAAGMAVLTIGVICQIMQLVVSIRNREALRDRTGDPWDGRSLEWATSSPPPVFNFAFSPDVRGEDAYWDMKTHARQQSFEHDAPEYHDIEMPRNSPTGFICAFFATIMGFALIWHIWWMVILGGIGAFATFVVFAWRDHDEYVIPADEVARIDRINLEERRSLVSMAGVV</sequence>
<comment type="catalytic activity">
    <reaction>
        <text>4 Fe(II)-[cytochrome c] + O2 + 8 H(+)(in) = 4 Fe(III)-[cytochrome c] + 2 H2O + 4 H(+)(out)</text>
        <dbReference type="Rhea" id="RHEA:11436"/>
        <dbReference type="Rhea" id="RHEA-COMP:10350"/>
        <dbReference type="Rhea" id="RHEA-COMP:14399"/>
        <dbReference type="ChEBI" id="CHEBI:15377"/>
        <dbReference type="ChEBI" id="CHEBI:15378"/>
        <dbReference type="ChEBI" id="CHEBI:15379"/>
        <dbReference type="ChEBI" id="CHEBI:29033"/>
        <dbReference type="ChEBI" id="CHEBI:29034"/>
        <dbReference type="EC" id="7.1.1.9"/>
    </reaction>
</comment>
<comment type="pathway">
    <text>Energy metabolism; oxidative phosphorylation.</text>
</comment>
<comment type="subcellular location">
    <subcellularLocation>
        <location evidence="1">Cell membrane</location>
        <topology evidence="1">Multi-pass membrane protein</topology>
    </subcellularLocation>
</comment>
<comment type="similarity">
    <text evidence="3">Belongs to the heme-copper respiratory oxidase family.</text>
</comment>
<accession>P98057</accession>
<evidence type="ECO:0000250" key="1"/>
<evidence type="ECO:0000255" key="2"/>
<evidence type="ECO:0000305" key="3"/>
<dbReference type="EC" id="7.1.1.9"/>
<dbReference type="EMBL" id="L25841">
    <property type="protein sequence ID" value="AAA26210.1"/>
    <property type="molecule type" value="Genomic_DNA"/>
</dbReference>
<dbReference type="EMBL" id="BA000040">
    <property type="protein sequence ID" value="BAC47980.1"/>
    <property type="molecule type" value="Genomic_DNA"/>
</dbReference>
<dbReference type="RefSeq" id="NP_769355.1">
    <property type="nucleotide sequence ID" value="NC_004463.1"/>
</dbReference>
<dbReference type="RefSeq" id="WP_011085500.1">
    <property type="nucleotide sequence ID" value="NC_004463.1"/>
</dbReference>
<dbReference type="SMR" id="P98057"/>
<dbReference type="STRING" id="224911.AAV28_10585"/>
<dbReference type="EnsemblBacteria" id="BAC47980">
    <property type="protein sequence ID" value="BAC47980"/>
    <property type="gene ID" value="BAC47980"/>
</dbReference>
<dbReference type="GeneID" id="46489761"/>
<dbReference type="KEGG" id="bja:blr2715"/>
<dbReference type="PATRIC" id="fig|224911.44.peg.2330"/>
<dbReference type="eggNOG" id="COG0843">
    <property type="taxonomic scope" value="Bacteria"/>
</dbReference>
<dbReference type="HOGENOM" id="CLU_011899_7_1_5"/>
<dbReference type="InParanoid" id="P98057"/>
<dbReference type="OrthoDB" id="9803294at2"/>
<dbReference type="PhylomeDB" id="P98057"/>
<dbReference type="UniPathway" id="UPA00705"/>
<dbReference type="Proteomes" id="UP000002526">
    <property type="component" value="Chromosome"/>
</dbReference>
<dbReference type="GO" id="GO:0005886">
    <property type="term" value="C:plasma membrane"/>
    <property type="evidence" value="ECO:0000318"/>
    <property type="project" value="GO_Central"/>
</dbReference>
<dbReference type="GO" id="GO:0009486">
    <property type="term" value="F:cytochrome bo3 ubiquinol oxidase activity"/>
    <property type="evidence" value="ECO:0000318"/>
    <property type="project" value="GO_Central"/>
</dbReference>
<dbReference type="GO" id="GO:0004129">
    <property type="term" value="F:cytochrome-c oxidase activity"/>
    <property type="evidence" value="ECO:0007669"/>
    <property type="project" value="UniProtKB-EC"/>
</dbReference>
<dbReference type="GO" id="GO:0020037">
    <property type="term" value="F:heme binding"/>
    <property type="evidence" value="ECO:0007669"/>
    <property type="project" value="InterPro"/>
</dbReference>
<dbReference type="GO" id="GO:0046872">
    <property type="term" value="F:metal ion binding"/>
    <property type="evidence" value="ECO:0007669"/>
    <property type="project" value="UniProtKB-KW"/>
</dbReference>
<dbReference type="GO" id="GO:0016682">
    <property type="term" value="F:oxidoreductase activity, acting on diphenols and related substances as donors, oxygen as acceptor"/>
    <property type="evidence" value="ECO:0007669"/>
    <property type="project" value="InterPro"/>
</dbReference>
<dbReference type="GO" id="GO:0009060">
    <property type="term" value="P:aerobic respiration"/>
    <property type="evidence" value="ECO:0000318"/>
    <property type="project" value="GO_Central"/>
</dbReference>
<dbReference type="GO" id="GO:0015990">
    <property type="term" value="P:electron transport coupled proton transport"/>
    <property type="evidence" value="ECO:0000318"/>
    <property type="project" value="GO_Central"/>
</dbReference>
<dbReference type="GO" id="GO:0006119">
    <property type="term" value="P:oxidative phosphorylation"/>
    <property type="evidence" value="ECO:0007669"/>
    <property type="project" value="UniProtKB-UniPathway"/>
</dbReference>
<dbReference type="GO" id="GO:0022904">
    <property type="term" value="P:respiratory electron transport chain"/>
    <property type="evidence" value="ECO:0000318"/>
    <property type="project" value="GO_Central"/>
</dbReference>
<dbReference type="CDD" id="cd01662">
    <property type="entry name" value="Ubiquinol_Oxidase_I"/>
    <property type="match status" value="1"/>
</dbReference>
<dbReference type="FunFam" id="1.20.210.10:FF:000002">
    <property type="entry name" value="Cytochrome o ubiquinol oxidase, subunit I"/>
    <property type="match status" value="1"/>
</dbReference>
<dbReference type="Gene3D" id="1.20.210.10">
    <property type="entry name" value="Cytochrome c oxidase-like, subunit I domain"/>
    <property type="match status" value="1"/>
</dbReference>
<dbReference type="InterPro" id="IPR023616">
    <property type="entry name" value="Cyt_c_oxase-like_su1_dom"/>
</dbReference>
<dbReference type="InterPro" id="IPR036927">
    <property type="entry name" value="Cyt_c_oxase-like_su1_sf"/>
</dbReference>
<dbReference type="InterPro" id="IPR000883">
    <property type="entry name" value="Cyt_C_Oxase_1"/>
</dbReference>
<dbReference type="InterPro" id="IPR023615">
    <property type="entry name" value="Cyt_c_Oxase_su1_BS"/>
</dbReference>
<dbReference type="InterPro" id="IPR014207">
    <property type="entry name" value="Cyt_c_ubiqinol_oxidase_su1"/>
</dbReference>
<dbReference type="NCBIfam" id="TIGR02843">
    <property type="entry name" value="CyoB"/>
    <property type="match status" value="1"/>
</dbReference>
<dbReference type="PANTHER" id="PTHR10422:SF35">
    <property type="entry name" value="CYTOCHROME BO(3) UBIQUINOL OXIDASE SUBUNIT 1"/>
    <property type="match status" value="1"/>
</dbReference>
<dbReference type="PANTHER" id="PTHR10422">
    <property type="entry name" value="CYTOCHROME C OXIDASE SUBUNIT 1"/>
    <property type="match status" value="1"/>
</dbReference>
<dbReference type="Pfam" id="PF00115">
    <property type="entry name" value="COX1"/>
    <property type="match status" value="1"/>
</dbReference>
<dbReference type="PRINTS" id="PR01165">
    <property type="entry name" value="CYCOXIDASEI"/>
</dbReference>
<dbReference type="SUPFAM" id="SSF81442">
    <property type="entry name" value="Cytochrome c oxidase subunit I-like"/>
    <property type="match status" value="1"/>
</dbReference>
<dbReference type="PROSITE" id="PS50855">
    <property type="entry name" value="COX1"/>
    <property type="match status" value="1"/>
</dbReference>
<dbReference type="PROSITE" id="PS00077">
    <property type="entry name" value="COX1_CUB"/>
    <property type="match status" value="1"/>
</dbReference>
<protein>
    <recommendedName>
        <fullName>Probable cytochrome c oxidase subunit 1</fullName>
        <ecNumber>7.1.1.9</ecNumber>
    </recommendedName>
    <alternativeName>
        <fullName>Cytochrome c oxidase polypeptide I</fullName>
    </alternativeName>
    <alternativeName>
        <fullName>Fourth terminal oxidase</fullName>
    </alternativeName>
</protein>
<gene>
    <name type="ordered locus">blr2715</name>
</gene>
<name>COX14_BRADU</name>
<proteinExistence type="inferred from homology"/>
<organism>
    <name type="scientific">Bradyrhizobium diazoefficiens (strain JCM 10833 / BCRC 13528 / IAM 13628 / NBRC 14792 / USDA 110)</name>
    <dbReference type="NCBI Taxonomy" id="224911"/>
    <lineage>
        <taxon>Bacteria</taxon>
        <taxon>Pseudomonadati</taxon>
        <taxon>Pseudomonadota</taxon>
        <taxon>Alphaproteobacteria</taxon>
        <taxon>Hyphomicrobiales</taxon>
        <taxon>Nitrobacteraceae</taxon>
        <taxon>Bradyrhizobium</taxon>
    </lineage>
</organism>
<feature type="chain" id="PRO_0000183471" description="Probable cytochrome c oxidase subunit 1">
    <location>
        <begin position="1"/>
        <end position="666"/>
    </location>
</feature>
<feature type="transmembrane region" description="Helical" evidence="2">
    <location>
        <begin position="16"/>
        <end position="36"/>
    </location>
</feature>
<feature type="transmembrane region" description="Helical" evidence="2">
    <location>
        <begin position="57"/>
        <end position="77"/>
    </location>
</feature>
<feature type="transmembrane region" description="Helical" evidence="2">
    <location>
        <begin position="108"/>
        <end position="128"/>
    </location>
</feature>
<feature type="transmembrane region" description="Helical" evidence="2">
    <location>
        <begin position="142"/>
        <end position="162"/>
    </location>
</feature>
<feature type="transmembrane region" description="Helical" evidence="2">
    <location>
        <begin position="192"/>
        <end position="212"/>
    </location>
</feature>
<feature type="transmembrane region" description="Helical" evidence="2">
    <location>
        <begin position="234"/>
        <end position="254"/>
    </location>
</feature>
<feature type="transmembrane region" description="Helical" evidence="2">
    <location>
        <begin position="277"/>
        <end position="297"/>
    </location>
</feature>
<feature type="transmembrane region" description="Helical" evidence="2">
    <location>
        <begin position="315"/>
        <end position="335"/>
    </location>
</feature>
<feature type="transmembrane region" description="Helical" evidence="2">
    <location>
        <begin position="346"/>
        <end position="366"/>
    </location>
</feature>
<feature type="transmembrane region" description="Helical" evidence="2">
    <location>
        <begin position="380"/>
        <end position="400"/>
    </location>
</feature>
<feature type="transmembrane region" description="Helical" evidence="2">
    <location>
        <begin position="413"/>
        <end position="433"/>
    </location>
</feature>
<feature type="transmembrane region" description="Helical" evidence="2">
    <location>
        <begin position="456"/>
        <end position="476"/>
    </location>
</feature>
<feature type="transmembrane region" description="Helical" evidence="2">
    <location>
        <begin position="493"/>
        <end position="513"/>
    </location>
</feature>
<feature type="transmembrane region" description="Helical" evidence="2">
    <location>
        <begin position="591"/>
        <end position="611"/>
    </location>
</feature>
<feature type="transmembrane region" description="Helical" evidence="2">
    <location>
        <begin position="612"/>
        <end position="632"/>
    </location>
</feature>
<feature type="binding site" description="axial binding residue" evidence="1">
    <location>
        <position position="105"/>
    </location>
    <ligand>
        <name>heme b</name>
        <dbReference type="ChEBI" id="CHEBI:60344"/>
        <label>1; low-spin</label>
    </ligand>
    <ligandPart>
        <name>Fe</name>
        <dbReference type="ChEBI" id="CHEBI:18248"/>
    </ligandPart>
</feature>
<feature type="binding site" evidence="1">
    <location>
        <position position="283"/>
    </location>
    <ligand>
        <name>Cu cation</name>
        <dbReference type="ChEBI" id="CHEBI:23378"/>
        <label>B</label>
    </ligand>
</feature>
<feature type="binding site" evidence="1">
    <location>
        <position position="287"/>
    </location>
    <ligand>
        <name>Cu cation</name>
        <dbReference type="ChEBI" id="CHEBI:23378"/>
        <label>B</label>
    </ligand>
</feature>
<feature type="binding site" evidence="1">
    <location>
        <position position="332"/>
    </location>
    <ligand>
        <name>Cu cation</name>
        <dbReference type="ChEBI" id="CHEBI:23378"/>
        <label>B</label>
    </ligand>
</feature>
<feature type="binding site" evidence="1">
    <location>
        <position position="333"/>
    </location>
    <ligand>
        <name>Cu cation</name>
        <dbReference type="ChEBI" id="CHEBI:23378"/>
        <label>B</label>
    </ligand>
</feature>
<feature type="binding site" description="axial binding residue" evidence="1">
    <location>
        <position position="418"/>
    </location>
    <ligand>
        <name>heme b</name>
        <dbReference type="ChEBI" id="CHEBI:60344"/>
        <label>2; high-spin</label>
    </ligand>
    <ligandPart>
        <name>Fe</name>
        <dbReference type="ChEBI" id="CHEBI:18248"/>
    </ligandPart>
</feature>
<feature type="binding site" description="axial binding residue" evidence="1">
    <location>
        <position position="420"/>
    </location>
    <ligand>
        <name>heme b</name>
        <dbReference type="ChEBI" id="CHEBI:60344"/>
        <label>1; low-spin</label>
    </ligand>
    <ligandPart>
        <name>Fe</name>
        <dbReference type="ChEBI" id="CHEBI:18248"/>
    </ligandPart>
</feature>
<feature type="cross-link" description="1'-histidyl-3'-tyrosine (His-Tyr)" evidence="1">
    <location>
        <begin position="283"/>
        <end position="287"/>
    </location>
</feature>
<feature type="sequence conflict" description="In Ref. 1; AAA26210." evidence="3" ref="1">
    <original>G</original>
    <variation>D</variation>
    <location>
        <position position="204"/>
    </location>
</feature>
<reference key="1">
    <citation type="journal article" date="1994" name="Gene">
        <title>Genetic evidence for a fourth terminal oxidase in Bradyrhizobium japonicum.</title>
        <authorList>
            <person name="Surpin M.A."/>
            <person name="Moshiri F."/>
            <person name="Murphy A.M."/>
            <person name="Maier R.J."/>
        </authorList>
    </citation>
    <scope>NUCLEOTIDE SEQUENCE [GENOMIC DNA]</scope>
</reference>
<reference key="2">
    <citation type="journal article" date="2002" name="DNA Res.">
        <title>Complete genomic sequence of nitrogen-fixing symbiotic bacterium Bradyrhizobium japonicum USDA110.</title>
        <authorList>
            <person name="Kaneko T."/>
            <person name="Nakamura Y."/>
            <person name="Sato S."/>
            <person name="Minamisawa K."/>
            <person name="Uchiumi T."/>
            <person name="Sasamoto S."/>
            <person name="Watanabe A."/>
            <person name="Idesawa K."/>
            <person name="Iriguchi M."/>
            <person name="Kawashima K."/>
            <person name="Kohara M."/>
            <person name="Matsumoto M."/>
            <person name="Shimpo S."/>
            <person name="Tsuruoka H."/>
            <person name="Wada T."/>
            <person name="Yamada M."/>
            <person name="Tabata S."/>
        </authorList>
    </citation>
    <scope>NUCLEOTIDE SEQUENCE [LARGE SCALE GENOMIC DNA]</scope>
    <source>
        <strain>JCM 10833 / BCRC 13528 / IAM 13628 / NBRC 14792 / USDA 110</strain>
    </source>
</reference>
<keyword id="KW-1003">Cell membrane</keyword>
<keyword id="KW-0186">Copper</keyword>
<keyword id="KW-0249">Electron transport</keyword>
<keyword id="KW-0349">Heme</keyword>
<keyword id="KW-0408">Iron</keyword>
<keyword id="KW-0472">Membrane</keyword>
<keyword id="KW-0479">Metal-binding</keyword>
<keyword id="KW-1185">Reference proteome</keyword>
<keyword id="KW-0679">Respiratory chain</keyword>
<keyword id="KW-1278">Translocase</keyword>
<keyword id="KW-0812">Transmembrane</keyword>
<keyword id="KW-1133">Transmembrane helix</keyword>
<keyword id="KW-0813">Transport</keyword>